<name>YD269_YEAST</name>
<protein>
    <recommendedName>
        <fullName>Putative uncharacterized protein YDR269C</fullName>
    </recommendedName>
</protein>
<proteinExistence type="uncertain"/>
<comment type="subcellular location">
    <subcellularLocation>
        <location evidence="2">Membrane</location>
        <topology evidence="2">Multi-pass membrane protein</topology>
    </subcellularLocation>
</comment>
<comment type="miscellaneous">
    <text evidence="2">Overlaps CCC2.</text>
</comment>
<comment type="caution">
    <text evidence="3">Product of a dubious gene prediction unlikely to encode a functional protein. Because of that it is not part of the S.cerevisiae S288c complete/reference proteome set.</text>
</comment>
<organism>
    <name type="scientific">Saccharomyces cerevisiae (strain ATCC 204508 / S288c)</name>
    <name type="common">Baker's yeast</name>
    <dbReference type="NCBI Taxonomy" id="559292"/>
    <lineage>
        <taxon>Eukaryota</taxon>
        <taxon>Fungi</taxon>
        <taxon>Dikarya</taxon>
        <taxon>Ascomycota</taxon>
        <taxon>Saccharomycotina</taxon>
        <taxon>Saccharomycetes</taxon>
        <taxon>Saccharomycetales</taxon>
        <taxon>Saccharomycetaceae</taxon>
        <taxon>Saccharomyces</taxon>
    </lineage>
</organism>
<feature type="chain" id="PRO_0000299879" description="Putative uncharacterized protein YDR269C">
    <location>
        <begin position="1"/>
        <end position="107"/>
    </location>
</feature>
<feature type="transmembrane region" description="Helical" evidence="1">
    <location>
        <begin position="16"/>
        <end position="36"/>
    </location>
</feature>
<feature type="transmembrane region" description="Helical" evidence="1">
    <location>
        <begin position="47"/>
        <end position="67"/>
    </location>
</feature>
<feature type="transmembrane region" description="Helical" evidence="1">
    <location>
        <begin position="85"/>
        <end position="105"/>
    </location>
</feature>
<accession>P87281</accession>
<keyword id="KW-0472">Membrane</keyword>
<keyword id="KW-0812">Transmembrane</keyword>
<keyword id="KW-1133">Transmembrane helix</keyword>
<dbReference type="EMBL" id="U51030">
    <property type="protein sequence ID" value="AAB64462.1"/>
    <property type="molecule type" value="Genomic_DNA"/>
</dbReference>
<dbReference type="PIR" id="S70221">
    <property type="entry name" value="S70221"/>
</dbReference>
<dbReference type="DIP" id="DIP-5128N"/>
<dbReference type="IntAct" id="P87281">
    <property type="interactions" value="1"/>
</dbReference>
<dbReference type="PaxDb" id="4932-YDR269C"/>
<dbReference type="EnsemblFungi" id="YDR269C_mRNA">
    <property type="protein sequence ID" value="YDR269C"/>
    <property type="gene ID" value="YDR269C"/>
</dbReference>
<dbReference type="AGR" id="SGD:S000002677"/>
<dbReference type="SGD" id="S000002677">
    <property type="gene designation" value="YDR269C"/>
</dbReference>
<dbReference type="HOGENOM" id="CLU_2212006_0_0_1"/>
<dbReference type="GO" id="GO:0016020">
    <property type="term" value="C:membrane"/>
    <property type="evidence" value="ECO:0007669"/>
    <property type="project" value="UniProtKB-SubCell"/>
</dbReference>
<sequence>MPSTCLVTVETQDPQVIPCTLSSPSFVLMAVISESLSISQSNPQSSIISLIESAVTSLSYVTWHSLVTKLISHFVTPFKARNCVLIVLVQALHVIPCTASITSLISF</sequence>
<evidence type="ECO:0000255" key="1"/>
<evidence type="ECO:0000305" key="2"/>
<evidence type="ECO:0000305" key="3">
    <source>
    </source>
</evidence>
<gene>
    <name type="ordered locus">YDR269C</name>
</gene>
<reference key="1">
    <citation type="journal article" date="1997" name="Nature">
        <title>The nucleotide sequence of Saccharomyces cerevisiae chromosome IV.</title>
        <authorList>
            <person name="Jacq C."/>
            <person name="Alt-Moerbe J."/>
            <person name="Andre B."/>
            <person name="Arnold W."/>
            <person name="Bahr A."/>
            <person name="Ballesta J.P.G."/>
            <person name="Bargues M."/>
            <person name="Baron L."/>
            <person name="Becker A."/>
            <person name="Biteau N."/>
            <person name="Bloecker H."/>
            <person name="Blugeon C."/>
            <person name="Boskovic J."/>
            <person name="Brandt P."/>
            <person name="Brueckner M."/>
            <person name="Buitrago M.J."/>
            <person name="Coster F."/>
            <person name="Delaveau T."/>
            <person name="del Rey F."/>
            <person name="Dujon B."/>
            <person name="Eide L.G."/>
            <person name="Garcia-Cantalejo J.M."/>
            <person name="Goffeau A."/>
            <person name="Gomez-Peris A."/>
            <person name="Granotier C."/>
            <person name="Hanemann V."/>
            <person name="Hankeln T."/>
            <person name="Hoheisel J.D."/>
            <person name="Jaeger W."/>
            <person name="Jimenez A."/>
            <person name="Jonniaux J.-L."/>
            <person name="Kraemer C."/>
            <person name="Kuester H."/>
            <person name="Laamanen P."/>
            <person name="Legros Y."/>
            <person name="Louis E.J."/>
            <person name="Moeller-Rieker S."/>
            <person name="Monnet A."/>
            <person name="Moro M."/>
            <person name="Mueller-Auer S."/>
            <person name="Nussbaumer B."/>
            <person name="Paricio N."/>
            <person name="Paulin L."/>
            <person name="Perea J."/>
            <person name="Perez-Alonso M."/>
            <person name="Perez-Ortin J.E."/>
            <person name="Pohl T.M."/>
            <person name="Prydz H."/>
            <person name="Purnelle B."/>
            <person name="Rasmussen S.W."/>
            <person name="Remacha M.A."/>
            <person name="Revuelta J.L."/>
            <person name="Rieger M."/>
            <person name="Salom D."/>
            <person name="Saluz H.P."/>
            <person name="Saiz J.E."/>
            <person name="Saren A.-M."/>
            <person name="Schaefer M."/>
            <person name="Scharfe M."/>
            <person name="Schmidt E.R."/>
            <person name="Schneider C."/>
            <person name="Scholler P."/>
            <person name="Schwarz S."/>
            <person name="Soler-Mira A."/>
            <person name="Urrestarazu L.A."/>
            <person name="Verhasselt P."/>
            <person name="Vissers S."/>
            <person name="Voet M."/>
            <person name="Volckaert G."/>
            <person name="Wagner G."/>
            <person name="Wambutt R."/>
            <person name="Wedler E."/>
            <person name="Wedler H."/>
            <person name="Woelfl S."/>
            <person name="Harris D.E."/>
            <person name="Bowman S."/>
            <person name="Brown D."/>
            <person name="Churcher C.M."/>
            <person name="Connor R."/>
            <person name="Dedman K."/>
            <person name="Gentles S."/>
            <person name="Hamlin N."/>
            <person name="Hunt S."/>
            <person name="Jones L."/>
            <person name="McDonald S."/>
            <person name="Murphy L.D."/>
            <person name="Niblett D."/>
            <person name="Odell C."/>
            <person name="Oliver K."/>
            <person name="Rajandream M.A."/>
            <person name="Richards C."/>
            <person name="Shore L."/>
            <person name="Walsh S.V."/>
            <person name="Barrell B.G."/>
            <person name="Dietrich F.S."/>
            <person name="Mulligan J.T."/>
            <person name="Allen E."/>
            <person name="Araujo R."/>
            <person name="Aviles E."/>
            <person name="Berno A."/>
            <person name="Carpenter J."/>
            <person name="Chen E."/>
            <person name="Cherry J.M."/>
            <person name="Chung E."/>
            <person name="Duncan M."/>
            <person name="Hunicke-Smith S."/>
            <person name="Hyman R.W."/>
            <person name="Komp C."/>
            <person name="Lashkari D."/>
            <person name="Lew H."/>
            <person name="Lin D."/>
            <person name="Mosedale D."/>
            <person name="Nakahara K."/>
            <person name="Namath A."/>
            <person name="Oefner P."/>
            <person name="Oh C."/>
            <person name="Petel F.X."/>
            <person name="Roberts D."/>
            <person name="Schramm S."/>
            <person name="Schroeder M."/>
            <person name="Shogren T."/>
            <person name="Shroff N."/>
            <person name="Winant A."/>
            <person name="Yelton M.A."/>
            <person name="Botstein D."/>
            <person name="Davis R.W."/>
            <person name="Johnston M."/>
            <person name="Andrews S."/>
            <person name="Brinkman R."/>
            <person name="Cooper J."/>
            <person name="Ding H."/>
            <person name="Du Z."/>
            <person name="Favello A."/>
            <person name="Fulton L."/>
            <person name="Gattung S."/>
            <person name="Greco T."/>
            <person name="Hallsworth K."/>
            <person name="Hawkins J."/>
            <person name="Hillier L.W."/>
            <person name="Jier M."/>
            <person name="Johnson D."/>
            <person name="Johnston L."/>
            <person name="Kirsten J."/>
            <person name="Kucaba T."/>
            <person name="Langston Y."/>
            <person name="Latreille P."/>
            <person name="Le T."/>
            <person name="Mardis E."/>
            <person name="Menezes S."/>
            <person name="Miller N."/>
            <person name="Nhan M."/>
            <person name="Pauley A."/>
            <person name="Peluso D."/>
            <person name="Rifkin L."/>
            <person name="Riles L."/>
            <person name="Taich A."/>
            <person name="Trevaskis E."/>
            <person name="Vignati D."/>
            <person name="Wilcox L."/>
            <person name="Wohldman P."/>
            <person name="Vaudin M."/>
            <person name="Wilson R."/>
            <person name="Waterston R."/>
            <person name="Albermann K."/>
            <person name="Hani J."/>
            <person name="Heumann K."/>
            <person name="Kleine K."/>
            <person name="Mewes H.-W."/>
            <person name="Zollner A."/>
            <person name="Zaccaria P."/>
        </authorList>
    </citation>
    <scope>NUCLEOTIDE SEQUENCE [LARGE SCALE GENOMIC DNA]</scope>
    <source>
        <strain>ATCC 204508 / S288c</strain>
    </source>
</reference>
<reference key="2">
    <citation type="journal article" date="2014" name="G3 (Bethesda)">
        <title>The reference genome sequence of Saccharomyces cerevisiae: Then and now.</title>
        <authorList>
            <person name="Engel S.R."/>
            <person name="Dietrich F.S."/>
            <person name="Fisk D.G."/>
            <person name="Binkley G."/>
            <person name="Balakrishnan R."/>
            <person name="Costanzo M.C."/>
            <person name="Dwight S.S."/>
            <person name="Hitz B.C."/>
            <person name="Karra K."/>
            <person name="Nash R.S."/>
            <person name="Weng S."/>
            <person name="Wong E.D."/>
            <person name="Lloyd P."/>
            <person name="Skrzypek M.S."/>
            <person name="Miyasato S.R."/>
            <person name="Simison M."/>
            <person name="Cherry J.M."/>
        </authorList>
    </citation>
    <scope>GENOME REANNOTATION</scope>
    <source>
        <strain>ATCC 204508 / S288c</strain>
    </source>
</reference>